<proteinExistence type="inferred from homology"/>
<feature type="chain" id="PRO_0000272575" description="Phosphate import ATP-binding protein PstB">
    <location>
        <begin position="1"/>
        <end position="267"/>
    </location>
</feature>
<feature type="domain" description="ABC transporter" evidence="1">
    <location>
        <begin position="21"/>
        <end position="262"/>
    </location>
</feature>
<feature type="binding site" evidence="1">
    <location>
        <begin position="53"/>
        <end position="60"/>
    </location>
    <ligand>
        <name>ATP</name>
        <dbReference type="ChEBI" id="CHEBI:30616"/>
    </ligand>
</feature>
<keyword id="KW-0067">ATP-binding</keyword>
<keyword id="KW-0997">Cell inner membrane</keyword>
<keyword id="KW-1003">Cell membrane</keyword>
<keyword id="KW-0472">Membrane</keyword>
<keyword id="KW-0547">Nucleotide-binding</keyword>
<keyword id="KW-0592">Phosphate transport</keyword>
<keyword id="KW-1278">Translocase</keyword>
<keyword id="KW-0813">Transport</keyword>
<protein>
    <recommendedName>
        <fullName evidence="1">Phosphate import ATP-binding protein PstB</fullName>
        <ecNumber evidence="1">7.3.2.1</ecNumber>
    </recommendedName>
    <alternativeName>
        <fullName evidence="1">ABC phosphate transporter</fullName>
    </alternativeName>
    <alternativeName>
        <fullName evidence="1">Phosphate-transporting ATPase</fullName>
    </alternativeName>
</protein>
<organism>
    <name type="scientific">Xanthomonas euvesicatoria pv. vesicatoria (strain 85-10)</name>
    <name type="common">Xanthomonas campestris pv. vesicatoria</name>
    <dbReference type="NCBI Taxonomy" id="316273"/>
    <lineage>
        <taxon>Bacteria</taxon>
        <taxon>Pseudomonadati</taxon>
        <taxon>Pseudomonadota</taxon>
        <taxon>Gammaproteobacteria</taxon>
        <taxon>Lysobacterales</taxon>
        <taxon>Lysobacteraceae</taxon>
        <taxon>Xanthomonas</taxon>
    </lineage>
</organism>
<gene>
    <name evidence="1" type="primary">pstB</name>
    <name type="ordered locus">XCV1614</name>
</gene>
<sequence>MHRIAVPAATGAPTAQEPVKVAARNLDFYYDKYHALKSINIEIPEKRVTALIGPSGCGKSTLLRIFNRIYALYPKMEARGEVLLDNENILSPKYPMNRLRSKVGMVFQKPVPFPMTIFENVAYGIRHHEKLSKADMQNRVEQALRQGALWDEVKDKLGQSALGLSGGQQQRLCIARAVALRPDVLLLDEPTSALDPISTSRIEQLVEELKRDYTIVIVTHNMQQAARVSDYTAFMYLGDLIEHDRTETIFSQPSKQQTEDYITGRFG</sequence>
<evidence type="ECO:0000255" key="1">
    <source>
        <dbReference type="HAMAP-Rule" id="MF_01702"/>
    </source>
</evidence>
<evidence type="ECO:0000305" key="2"/>
<name>PSTB_XANE5</name>
<accession>Q3BV68</accession>
<reference key="1">
    <citation type="journal article" date="2005" name="J. Bacteriol.">
        <title>Insights into genome plasticity and pathogenicity of the plant pathogenic Bacterium Xanthomonas campestris pv. vesicatoria revealed by the complete genome sequence.</title>
        <authorList>
            <person name="Thieme F."/>
            <person name="Koebnik R."/>
            <person name="Bekel T."/>
            <person name="Berger C."/>
            <person name="Boch J."/>
            <person name="Buettner D."/>
            <person name="Caldana C."/>
            <person name="Gaigalat L."/>
            <person name="Goesmann A."/>
            <person name="Kay S."/>
            <person name="Kirchner O."/>
            <person name="Lanz C."/>
            <person name="Linke B."/>
            <person name="McHardy A.C."/>
            <person name="Meyer F."/>
            <person name="Mittenhuber G."/>
            <person name="Nies D.H."/>
            <person name="Niesbach-Kloesgen U."/>
            <person name="Patschkowski T."/>
            <person name="Rueckert C."/>
            <person name="Rupp O."/>
            <person name="Schneiker S."/>
            <person name="Schuster S.C."/>
            <person name="Vorhoelter F.J."/>
            <person name="Weber E."/>
            <person name="Puehler A."/>
            <person name="Bonas U."/>
            <person name="Bartels D."/>
            <person name="Kaiser O."/>
        </authorList>
    </citation>
    <scope>NUCLEOTIDE SEQUENCE [LARGE SCALE GENOMIC DNA]</scope>
    <source>
        <strain>85-10</strain>
    </source>
</reference>
<dbReference type="EC" id="7.3.2.1" evidence="1"/>
<dbReference type="EMBL" id="AM039952">
    <property type="protein sequence ID" value="CAJ23272.1"/>
    <property type="status" value="ALT_INIT"/>
    <property type="molecule type" value="Genomic_DNA"/>
</dbReference>
<dbReference type="SMR" id="Q3BV68"/>
<dbReference type="STRING" id="456327.BJD11_14525"/>
<dbReference type="KEGG" id="xcv:XCV1614"/>
<dbReference type="eggNOG" id="COG1117">
    <property type="taxonomic scope" value="Bacteria"/>
</dbReference>
<dbReference type="HOGENOM" id="CLU_000604_1_22_6"/>
<dbReference type="Proteomes" id="UP000007069">
    <property type="component" value="Chromosome"/>
</dbReference>
<dbReference type="GO" id="GO:0005886">
    <property type="term" value="C:plasma membrane"/>
    <property type="evidence" value="ECO:0007669"/>
    <property type="project" value="UniProtKB-SubCell"/>
</dbReference>
<dbReference type="GO" id="GO:0005524">
    <property type="term" value="F:ATP binding"/>
    <property type="evidence" value="ECO:0007669"/>
    <property type="project" value="UniProtKB-KW"/>
</dbReference>
<dbReference type="GO" id="GO:0016887">
    <property type="term" value="F:ATP hydrolysis activity"/>
    <property type="evidence" value="ECO:0007669"/>
    <property type="project" value="InterPro"/>
</dbReference>
<dbReference type="GO" id="GO:0015415">
    <property type="term" value="F:ATPase-coupled phosphate ion transmembrane transporter activity"/>
    <property type="evidence" value="ECO:0007669"/>
    <property type="project" value="UniProtKB-EC"/>
</dbReference>
<dbReference type="GO" id="GO:0035435">
    <property type="term" value="P:phosphate ion transmembrane transport"/>
    <property type="evidence" value="ECO:0007669"/>
    <property type="project" value="InterPro"/>
</dbReference>
<dbReference type="CDD" id="cd03260">
    <property type="entry name" value="ABC_PstB_phosphate_transporter"/>
    <property type="match status" value="1"/>
</dbReference>
<dbReference type="FunFam" id="3.40.50.300:FF:000132">
    <property type="entry name" value="Phosphate import ATP-binding protein PstB"/>
    <property type="match status" value="1"/>
</dbReference>
<dbReference type="Gene3D" id="3.40.50.300">
    <property type="entry name" value="P-loop containing nucleotide triphosphate hydrolases"/>
    <property type="match status" value="1"/>
</dbReference>
<dbReference type="InterPro" id="IPR003593">
    <property type="entry name" value="AAA+_ATPase"/>
</dbReference>
<dbReference type="InterPro" id="IPR003439">
    <property type="entry name" value="ABC_transporter-like_ATP-bd"/>
</dbReference>
<dbReference type="InterPro" id="IPR017871">
    <property type="entry name" value="ABC_transporter-like_CS"/>
</dbReference>
<dbReference type="InterPro" id="IPR027417">
    <property type="entry name" value="P-loop_NTPase"/>
</dbReference>
<dbReference type="InterPro" id="IPR005670">
    <property type="entry name" value="PstB-like"/>
</dbReference>
<dbReference type="NCBIfam" id="TIGR00972">
    <property type="entry name" value="3a0107s01c2"/>
    <property type="match status" value="1"/>
</dbReference>
<dbReference type="PANTHER" id="PTHR43423">
    <property type="entry name" value="ABC TRANSPORTER I FAMILY MEMBER 17"/>
    <property type="match status" value="1"/>
</dbReference>
<dbReference type="PANTHER" id="PTHR43423:SF3">
    <property type="entry name" value="PHOSPHATE IMPORT ATP-BINDING PROTEIN PSTB"/>
    <property type="match status" value="1"/>
</dbReference>
<dbReference type="Pfam" id="PF00005">
    <property type="entry name" value="ABC_tran"/>
    <property type="match status" value="1"/>
</dbReference>
<dbReference type="SMART" id="SM00382">
    <property type="entry name" value="AAA"/>
    <property type="match status" value="1"/>
</dbReference>
<dbReference type="SUPFAM" id="SSF52540">
    <property type="entry name" value="P-loop containing nucleoside triphosphate hydrolases"/>
    <property type="match status" value="1"/>
</dbReference>
<dbReference type="PROSITE" id="PS00211">
    <property type="entry name" value="ABC_TRANSPORTER_1"/>
    <property type="match status" value="1"/>
</dbReference>
<dbReference type="PROSITE" id="PS50893">
    <property type="entry name" value="ABC_TRANSPORTER_2"/>
    <property type="match status" value="1"/>
</dbReference>
<dbReference type="PROSITE" id="PS51238">
    <property type="entry name" value="PSTB"/>
    <property type="match status" value="1"/>
</dbReference>
<comment type="function">
    <text evidence="1">Part of the ABC transporter complex PstSACB involved in phosphate import. Responsible for energy coupling to the transport system.</text>
</comment>
<comment type="catalytic activity">
    <reaction evidence="1">
        <text>phosphate(out) + ATP + H2O = ADP + 2 phosphate(in) + H(+)</text>
        <dbReference type="Rhea" id="RHEA:24440"/>
        <dbReference type="ChEBI" id="CHEBI:15377"/>
        <dbReference type="ChEBI" id="CHEBI:15378"/>
        <dbReference type="ChEBI" id="CHEBI:30616"/>
        <dbReference type="ChEBI" id="CHEBI:43474"/>
        <dbReference type="ChEBI" id="CHEBI:456216"/>
        <dbReference type="EC" id="7.3.2.1"/>
    </reaction>
</comment>
<comment type="subunit">
    <text evidence="1">The complex is composed of two ATP-binding proteins (PstB), two transmembrane proteins (PstC and PstA) and a solute-binding protein (PstS).</text>
</comment>
<comment type="subcellular location">
    <subcellularLocation>
        <location evidence="1">Cell inner membrane</location>
        <topology evidence="1">Peripheral membrane protein</topology>
    </subcellularLocation>
</comment>
<comment type="similarity">
    <text evidence="1">Belongs to the ABC transporter superfamily. Phosphate importer (TC 3.A.1.7) family.</text>
</comment>
<comment type="sequence caution" evidence="2">
    <conflict type="erroneous initiation">
        <sequence resource="EMBL-CDS" id="CAJ23272"/>
    </conflict>
</comment>